<protein>
    <recommendedName>
        <fullName evidence="1">Phosphoribosyl-AMP cyclohydrolase</fullName>
        <shortName evidence="1">PRA-CH</shortName>
        <ecNumber evidence="1">3.5.4.19</ecNumber>
    </recommendedName>
</protein>
<organism>
    <name type="scientific">Mycobacterium bovis (strain BCG / Pasteur 1173P2)</name>
    <dbReference type="NCBI Taxonomy" id="410289"/>
    <lineage>
        <taxon>Bacteria</taxon>
        <taxon>Bacillati</taxon>
        <taxon>Actinomycetota</taxon>
        <taxon>Actinomycetes</taxon>
        <taxon>Mycobacteriales</taxon>
        <taxon>Mycobacteriaceae</taxon>
        <taxon>Mycobacterium</taxon>
        <taxon>Mycobacterium tuberculosis complex</taxon>
    </lineage>
</organism>
<keyword id="KW-0028">Amino-acid biosynthesis</keyword>
<keyword id="KW-0963">Cytoplasm</keyword>
<keyword id="KW-0368">Histidine biosynthesis</keyword>
<keyword id="KW-0378">Hydrolase</keyword>
<keyword id="KW-0460">Magnesium</keyword>
<keyword id="KW-0479">Metal-binding</keyword>
<keyword id="KW-0862">Zinc</keyword>
<name>HIS3_MYCBP</name>
<feature type="chain" id="PRO_1000063413" description="Phosphoribosyl-AMP cyclohydrolase">
    <location>
        <begin position="1"/>
        <end position="115"/>
    </location>
</feature>
<feature type="binding site" evidence="1">
    <location>
        <position position="80"/>
    </location>
    <ligand>
        <name>Mg(2+)</name>
        <dbReference type="ChEBI" id="CHEBI:18420"/>
    </ligand>
</feature>
<feature type="binding site" evidence="1">
    <location>
        <position position="81"/>
    </location>
    <ligand>
        <name>Zn(2+)</name>
        <dbReference type="ChEBI" id="CHEBI:29105"/>
        <note>ligand shared between dimeric partners</note>
    </ligand>
</feature>
<feature type="binding site" evidence="1">
    <location>
        <position position="82"/>
    </location>
    <ligand>
        <name>Mg(2+)</name>
        <dbReference type="ChEBI" id="CHEBI:18420"/>
    </ligand>
</feature>
<feature type="binding site" evidence="1">
    <location>
        <position position="84"/>
    </location>
    <ligand>
        <name>Mg(2+)</name>
        <dbReference type="ChEBI" id="CHEBI:18420"/>
    </ligand>
</feature>
<feature type="binding site" evidence="1">
    <location>
        <position position="97"/>
    </location>
    <ligand>
        <name>Zn(2+)</name>
        <dbReference type="ChEBI" id="CHEBI:29105"/>
        <note>ligand shared between dimeric partners</note>
    </ligand>
</feature>
<feature type="binding site" evidence="1">
    <location>
        <position position="104"/>
    </location>
    <ligand>
        <name>Zn(2+)</name>
        <dbReference type="ChEBI" id="CHEBI:29105"/>
        <note>ligand shared between dimeric partners</note>
    </ligand>
</feature>
<evidence type="ECO:0000255" key="1">
    <source>
        <dbReference type="HAMAP-Rule" id="MF_01021"/>
    </source>
</evidence>
<gene>
    <name evidence="1" type="primary">hisI</name>
    <name type="ordered locus">BCG_1644</name>
</gene>
<reference key="1">
    <citation type="journal article" date="2007" name="Proc. Natl. Acad. Sci. U.S.A.">
        <title>Genome plasticity of BCG and impact on vaccine efficacy.</title>
        <authorList>
            <person name="Brosch R."/>
            <person name="Gordon S.V."/>
            <person name="Garnier T."/>
            <person name="Eiglmeier K."/>
            <person name="Frigui W."/>
            <person name="Valenti P."/>
            <person name="Dos Santos S."/>
            <person name="Duthoy S."/>
            <person name="Lacroix C."/>
            <person name="Garcia-Pelayo C."/>
            <person name="Inwald J.K."/>
            <person name="Golby P."/>
            <person name="Garcia J.N."/>
            <person name="Hewinson R.G."/>
            <person name="Behr M.A."/>
            <person name="Quail M.A."/>
            <person name="Churcher C."/>
            <person name="Barrell B.G."/>
            <person name="Parkhill J."/>
            <person name="Cole S.T."/>
        </authorList>
    </citation>
    <scope>NUCLEOTIDE SEQUENCE [LARGE SCALE GENOMIC DNA]</scope>
    <source>
        <strain>BCG / Pasteur 1173P2</strain>
    </source>
</reference>
<comment type="function">
    <text evidence="1">Catalyzes the hydrolysis of the adenine ring of phosphoribosyl-AMP.</text>
</comment>
<comment type="catalytic activity">
    <reaction evidence="1">
        <text>1-(5-phospho-beta-D-ribosyl)-5'-AMP + H2O = 1-(5-phospho-beta-D-ribosyl)-5-[(5-phospho-beta-D-ribosylamino)methylideneamino]imidazole-4-carboxamide</text>
        <dbReference type="Rhea" id="RHEA:20049"/>
        <dbReference type="ChEBI" id="CHEBI:15377"/>
        <dbReference type="ChEBI" id="CHEBI:58435"/>
        <dbReference type="ChEBI" id="CHEBI:59457"/>
        <dbReference type="EC" id="3.5.4.19"/>
    </reaction>
</comment>
<comment type="cofactor">
    <cofactor evidence="1">
        <name>Mg(2+)</name>
        <dbReference type="ChEBI" id="CHEBI:18420"/>
    </cofactor>
    <text evidence="1">Binds 1 Mg(2+) ion per subunit.</text>
</comment>
<comment type="cofactor">
    <cofactor evidence="1">
        <name>Zn(2+)</name>
        <dbReference type="ChEBI" id="CHEBI:29105"/>
    </cofactor>
    <text evidence="1">Binds 1 zinc ion per subunit.</text>
</comment>
<comment type="pathway">
    <text evidence="1">Amino-acid biosynthesis; L-histidine biosynthesis; L-histidine from 5-phospho-alpha-D-ribose 1-diphosphate: step 3/9.</text>
</comment>
<comment type="subunit">
    <text evidence="1">Homodimer.</text>
</comment>
<comment type="subcellular location">
    <subcellularLocation>
        <location evidence="1">Cytoplasm</location>
    </subcellularLocation>
</comment>
<comment type="similarity">
    <text evidence="1">Belongs to the PRA-CH family.</text>
</comment>
<proteinExistence type="inferred from homology"/>
<accession>A1KJ22</accession>
<dbReference type="EC" id="3.5.4.19" evidence="1"/>
<dbReference type="EMBL" id="AM408590">
    <property type="protein sequence ID" value="CAL71631.1"/>
    <property type="molecule type" value="Genomic_DNA"/>
</dbReference>
<dbReference type="RefSeq" id="WP_003407963.1">
    <property type="nucleotide sequence ID" value="NC_008769.1"/>
</dbReference>
<dbReference type="SMR" id="A1KJ22"/>
<dbReference type="GeneID" id="45425574"/>
<dbReference type="KEGG" id="mbb:BCG_1644"/>
<dbReference type="HOGENOM" id="CLU_048577_5_1_11"/>
<dbReference type="UniPathway" id="UPA00031">
    <property type="reaction ID" value="UER00008"/>
</dbReference>
<dbReference type="Proteomes" id="UP000001472">
    <property type="component" value="Chromosome"/>
</dbReference>
<dbReference type="GO" id="GO:0005737">
    <property type="term" value="C:cytoplasm"/>
    <property type="evidence" value="ECO:0007669"/>
    <property type="project" value="UniProtKB-SubCell"/>
</dbReference>
<dbReference type="GO" id="GO:0000287">
    <property type="term" value="F:magnesium ion binding"/>
    <property type="evidence" value="ECO:0007669"/>
    <property type="project" value="UniProtKB-UniRule"/>
</dbReference>
<dbReference type="GO" id="GO:0004635">
    <property type="term" value="F:phosphoribosyl-AMP cyclohydrolase activity"/>
    <property type="evidence" value="ECO:0007669"/>
    <property type="project" value="UniProtKB-UniRule"/>
</dbReference>
<dbReference type="GO" id="GO:0008270">
    <property type="term" value="F:zinc ion binding"/>
    <property type="evidence" value="ECO:0007669"/>
    <property type="project" value="UniProtKB-UniRule"/>
</dbReference>
<dbReference type="GO" id="GO:0000105">
    <property type="term" value="P:L-histidine biosynthetic process"/>
    <property type="evidence" value="ECO:0007669"/>
    <property type="project" value="UniProtKB-UniRule"/>
</dbReference>
<dbReference type="FunFam" id="3.10.20.810:FF:000001">
    <property type="entry name" value="Histidine biosynthesis bifunctional protein HisIE"/>
    <property type="match status" value="1"/>
</dbReference>
<dbReference type="Gene3D" id="3.10.20.810">
    <property type="entry name" value="Phosphoribosyl-AMP cyclohydrolase"/>
    <property type="match status" value="1"/>
</dbReference>
<dbReference type="HAMAP" id="MF_01021">
    <property type="entry name" value="HisI"/>
    <property type="match status" value="1"/>
</dbReference>
<dbReference type="InterPro" id="IPR026660">
    <property type="entry name" value="PRA-CH"/>
</dbReference>
<dbReference type="InterPro" id="IPR002496">
    <property type="entry name" value="PRib_AMP_CycHydrolase_dom"/>
</dbReference>
<dbReference type="InterPro" id="IPR038019">
    <property type="entry name" value="PRib_AMP_CycHydrolase_sf"/>
</dbReference>
<dbReference type="NCBIfam" id="NF000768">
    <property type="entry name" value="PRK00051.1"/>
    <property type="match status" value="1"/>
</dbReference>
<dbReference type="PANTHER" id="PTHR42945">
    <property type="entry name" value="HISTIDINE BIOSYNTHESIS BIFUNCTIONAL PROTEIN"/>
    <property type="match status" value="1"/>
</dbReference>
<dbReference type="PANTHER" id="PTHR42945:SF11">
    <property type="entry name" value="PHOSPHORIBOSYL-AMP CYCLOHYDROLASE"/>
    <property type="match status" value="1"/>
</dbReference>
<dbReference type="Pfam" id="PF01502">
    <property type="entry name" value="PRA-CH"/>
    <property type="match status" value="1"/>
</dbReference>
<dbReference type="SUPFAM" id="SSF141734">
    <property type="entry name" value="HisI-like"/>
    <property type="match status" value="1"/>
</dbReference>
<sequence length="115" mass="12465">MTLDPKIAARLKRNADGLVTAVVQERGSGDVLMVAWMNDEALARTLQTREATYYSRSRAEQWVKGATSGHTQHVHSVRLDCDGDAVLLTVDQVGGACHTGDHSCFDAAVLLEPDD</sequence>